<evidence type="ECO:0000255" key="1">
    <source>
        <dbReference type="HAMAP-Rule" id="MF_00087"/>
    </source>
</evidence>
<accession>C3KDC5</accession>
<reference key="1">
    <citation type="journal article" date="2009" name="Genome Biol.">
        <title>Genomic and genetic analyses of diversity and plant interactions of Pseudomonas fluorescens.</title>
        <authorList>
            <person name="Silby M.W."/>
            <person name="Cerdeno-Tarraga A.M."/>
            <person name="Vernikos G.S."/>
            <person name="Giddens S.R."/>
            <person name="Jackson R.W."/>
            <person name="Preston G.M."/>
            <person name="Zhang X.-X."/>
            <person name="Moon C.D."/>
            <person name="Gehrig S.M."/>
            <person name="Godfrey S.A.C."/>
            <person name="Knight C.G."/>
            <person name="Malone J.G."/>
            <person name="Robinson Z."/>
            <person name="Spiers A.J."/>
            <person name="Harris S."/>
            <person name="Challis G.L."/>
            <person name="Yaxley A.M."/>
            <person name="Harris D."/>
            <person name="Seeger K."/>
            <person name="Murphy L."/>
            <person name="Rutter S."/>
            <person name="Squares R."/>
            <person name="Quail M.A."/>
            <person name="Saunders E."/>
            <person name="Mavromatis K."/>
            <person name="Brettin T.S."/>
            <person name="Bentley S.D."/>
            <person name="Hothersall J."/>
            <person name="Stephens E."/>
            <person name="Thomas C.M."/>
            <person name="Parkhill J."/>
            <person name="Levy S.B."/>
            <person name="Rainey P.B."/>
            <person name="Thomson N.R."/>
        </authorList>
    </citation>
    <scope>NUCLEOTIDE SEQUENCE [LARGE SCALE GENOMIC DNA]</scope>
    <source>
        <strain>SBW25</strain>
    </source>
</reference>
<gene>
    <name evidence="1" type="primary">hemA</name>
    <name type="ordered locus">PFLU_0737</name>
</gene>
<organism>
    <name type="scientific">Pseudomonas fluorescens (strain SBW25)</name>
    <dbReference type="NCBI Taxonomy" id="216595"/>
    <lineage>
        <taxon>Bacteria</taxon>
        <taxon>Pseudomonadati</taxon>
        <taxon>Pseudomonadota</taxon>
        <taxon>Gammaproteobacteria</taxon>
        <taxon>Pseudomonadales</taxon>
        <taxon>Pseudomonadaceae</taxon>
        <taxon>Pseudomonas</taxon>
    </lineage>
</organism>
<comment type="function">
    <text evidence="1">Catalyzes the NADPH-dependent reduction of glutamyl-tRNA(Glu) to glutamate 1-semialdehyde (GSA).</text>
</comment>
<comment type="catalytic activity">
    <reaction evidence="1">
        <text>(S)-4-amino-5-oxopentanoate + tRNA(Glu) + NADP(+) = L-glutamyl-tRNA(Glu) + NADPH + H(+)</text>
        <dbReference type="Rhea" id="RHEA:12344"/>
        <dbReference type="Rhea" id="RHEA-COMP:9663"/>
        <dbReference type="Rhea" id="RHEA-COMP:9680"/>
        <dbReference type="ChEBI" id="CHEBI:15378"/>
        <dbReference type="ChEBI" id="CHEBI:57501"/>
        <dbReference type="ChEBI" id="CHEBI:57783"/>
        <dbReference type="ChEBI" id="CHEBI:58349"/>
        <dbReference type="ChEBI" id="CHEBI:78442"/>
        <dbReference type="ChEBI" id="CHEBI:78520"/>
        <dbReference type="EC" id="1.2.1.70"/>
    </reaction>
</comment>
<comment type="pathway">
    <text evidence="1">Porphyrin-containing compound metabolism; protoporphyrin-IX biosynthesis; 5-aminolevulinate from L-glutamyl-tRNA(Glu): step 1/2.</text>
</comment>
<comment type="subunit">
    <text evidence="1">Homodimer.</text>
</comment>
<comment type="domain">
    <text evidence="1">Possesses an unusual extended V-shaped dimeric structure with each monomer consisting of three distinct domains arranged along a curved 'spinal' alpha-helix. The N-terminal catalytic domain specifically recognizes the glutamate moiety of the substrate. The second domain is the NADPH-binding domain, and the third C-terminal domain is responsible for dimerization.</text>
</comment>
<comment type="miscellaneous">
    <text evidence="1">During catalysis, the active site Cys acts as a nucleophile attacking the alpha-carbonyl group of tRNA-bound glutamate with the formation of a thioester intermediate between enzyme and glutamate, and the concomitant release of tRNA(Glu). The thioester intermediate is finally reduced by direct hydride transfer from NADPH, to form the product GSA.</text>
</comment>
<comment type="similarity">
    <text evidence="1">Belongs to the glutamyl-tRNA reductase family.</text>
</comment>
<feature type="chain" id="PRO_1000202640" description="Glutamyl-tRNA reductase">
    <location>
        <begin position="1"/>
        <end position="429"/>
    </location>
</feature>
<feature type="active site" description="Nucleophile" evidence="1">
    <location>
        <position position="50"/>
    </location>
</feature>
<feature type="binding site" evidence="1">
    <location>
        <begin position="49"/>
        <end position="52"/>
    </location>
    <ligand>
        <name>substrate</name>
    </ligand>
</feature>
<feature type="binding site" evidence="1">
    <location>
        <position position="107"/>
    </location>
    <ligand>
        <name>substrate</name>
    </ligand>
</feature>
<feature type="binding site" evidence="1">
    <location>
        <begin position="112"/>
        <end position="114"/>
    </location>
    <ligand>
        <name>substrate</name>
    </ligand>
</feature>
<feature type="binding site" evidence="1">
    <location>
        <position position="118"/>
    </location>
    <ligand>
        <name>substrate</name>
    </ligand>
</feature>
<feature type="binding site" evidence="1">
    <location>
        <begin position="187"/>
        <end position="192"/>
    </location>
    <ligand>
        <name>NADP(+)</name>
        <dbReference type="ChEBI" id="CHEBI:58349"/>
    </ligand>
</feature>
<feature type="site" description="Important for activity" evidence="1">
    <location>
        <position position="97"/>
    </location>
</feature>
<proteinExistence type="inferred from homology"/>
<name>HEM1_PSEFS</name>
<keyword id="KW-0521">NADP</keyword>
<keyword id="KW-0560">Oxidoreductase</keyword>
<keyword id="KW-0627">Porphyrin biosynthesis</keyword>
<dbReference type="EC" id="1.2.1.70" evidence="1"/>
<dbReference type="EMBL" id="AM181176">
    <property type="protein sequence ID" value="CAY47005.1"/>
    <property type="molecule type" value="Genomic_DNA"/>
</dbReference>
<dbReference type="RefSeq" id="WP_012722109.1">
    <property type="nucleotide sequence ID" value="NC_012660.1"/>
</dbReference>
<dbReference type="SMR" id="C3KDC5"/>
<dbReference type="STRING" id="294.SRM1_04800"/>
<dbReference type="PATRIC" id="fig|216595.4.peg.971"/>
<dbReference type="eggNOG" id="COG0373">
    <property type="taxonomic scope" value="Bacteria"/>
</dbReference>
<dbReference type="HOGENOM" id="CLU_035113_2_2_6"/>
<dbReference type="OrthoDB" id="110209at2"/>
<dbReference type="UniPathway" id="UPA00251">
    <property type="reaction ID" value="UER00316"/>
</dbReference>
<dbReference type="GO" id="GO:0008883">
    <property type="term" value="F:glutamyl-tRNA reductase activity"/>
    <property type="evidence" value="ECO:0007669"/>
    <property type="project" value="UniProtKB-UniRule"/>
</dbReference>
<dbReference type="GO" id="GO:0050661">
    <property type="term" value="F:NADP binding"/>
    <property type="evidence" value="ECO:0007669"/>
    <property type="project" value="InterPro"/>
</dbReference>
<dbReference type="GO" id="GO:0019353">
    <property type="term" value="P:protoporphyrinogen IX biosynthetic process from glutamate"/>
    <property type="evidence" value="ECO:0007669"/>
    <property type="project" value="TreeGrafter"/>
</dbReference>
<dbReference type="CDD" id="cd05213">
    <property type="entry name" value="NAD_bind_Glutamyl_tRNA_reduct"/>
    <property type="match status" value="1"/>
</dbReference>
<dbReference type="FunFam" id="3.30.460.30:FF:000001">
    <property type="entry name" value="Glutamyl-tRNA reductase"/>
    <property type="match status" value="1"/>
</dbReference>
<dbReference type="FunFam" id="3.40.50.720:FF:000031">
    <property type="entry name" value="Glutamyl-tRNA reductase"/>
    <property type="match status" value="1"/>
</dbReference>
<dbReference type="Gene3D" id="3.30.460.30">
    <property type="entry name" value="Glutamyl-tRNA reductase, N-terminal domain"/>
    <property type="match status" value="1"/>
</dbReference>
<dbReference type="Gene3D" id="3.40.50.720">
    <property type="entry name" value="NAD(P)-binding Rossmann-like Domain"/>
    <property type="match status" value="1"/>
</dbReference>
<dbReference type="HAMAP" id="MF_00087">
    <property type="entry name" value="Glu_tRNA_reductase"/>
    <property type="match status" value="1"/>
</dbReference>
<dbReference type="InterPro" id="IPR000343">
    <property type="entry name" value="4pyrrol_synth_GluRdtase"/>
</dbReference>
<dbReference type="InterPro" id="IPR015896">
    <property type="entry name" value="4pyrrol_synth_GluRdtase_dimer"/>
</dbReference>
<dbReference type="InterPro" id="IPR015895">
    <property type="entry name" value="4pyrrol_synth_GluRdtase_N"/>
</dbReference>
<dbReference type="InterPro" id="IPR018214">
    <property type="entry name" value="GluRdtase_CS"/>
</dbReference>
<dbReference type="InterPro" id="IPR036453">
    <property type="entry name" value="GluRdtase_dimer_dom_sf"/>
</dbReference>
<dbReference type="InterPro" id="IPR036343">
    <property type="entry name" value="GluRdtase_N_sf"/>
</dbReference>
<dbReference type="InterPro" id="IPR036291">
    <property type="entry name" value="NAD(P)-bd_dom_sf"/>
</dbReference>
<dbReference type="InterPro" id="IPR006151">
    <property type="entry name" value="Shikm_DH/Glu-tRNA_Rdtase"/>
</dbReference>
<dbReference type="NCBIfam" id="TIGR01035">
    <property type="entry name" value="hemA"/>
    <property type="match status" value="1"/>
</dbReference>
<dbReference type="PANTHER" id="PTHR43013">
    <property type="entry name" value="GLUTAMYL-TRNA REDUCTASE"/>
    <property type="match status" value="1"/>
</dbReference>
<dbReference type="PANTHER" id="PTHR43013:SF1">
    <property type="entry name" value="GLUTAMYL-TRNA REDUCTASE"/>
    <property type="match status" value="1"/>
</dbReference>
<dbReference type="Pfam" id="PF00745">
    <property type="entry name" value="GlutR_dimer"/>
    <property type="match status" value="1"/>
</dbReference>
<dbReference type="Pfam" id="PF05201">
    <property type="entry name" value="GlutR_N"/>
    <property type="match status" value="1"/>
</dbReference>
<dbReference type="Pfam" id="PF01488">
    <property type="entry name" value="Shikimate_DH"/>
    <property type="match status" value="1"/>
</dbReference>
<dbReference type="PIRSF" id="PIRSF000445">
    <property type="entry name" value="4pyrrol_synth_GluRdtase"/>
    <property type="match status" value="1"/>
</dbReference>
<dbReference type="SUPFAM" id="SSF69742">
    <property type="entry name" value="Glutamyl tRNA-reductase catalytic, N-terminal domain"/>
    <property type="match status" value="1"/>
</dbReference>
<dbReference type="SUPFAM" id="SSF69075">
    <property type="entry name" value="Glutamyl tRNA-reductase dimerization domain"/>
    <property type="match status" value="1"/>
</dbReference>
<dbReference type="SUPFAM" id="SSF51735">
    <property type="entry name" value="NAD(P)-binding Rossmann-fold domains"/>
    <property type="match status" value="1"/>
</dbReference>
<dbReference type="PROSITE" id="PS00747">
    <property type="entry name" value="GLUTR"/>
    <property type="match status" value="1"/>
</dbReference>
<sequence>MAFLALGINHKTASVDVRERVAFTPEQLVEALQQLCRLTDSREAAILSTCNRSELYIEQEHLSADVVLRWLADYHHLDLDDLRASAYVHEDDAAVRHMMRVASGLDSLVLGEPQILGQMKSAYAVAREAGTVGPLLGRLFQATFNSAKQVRTDTAIGENPVSVAFAAVSLAKQIFSDLQRSQALLIGAGETITLVARHLHDLGVKRIVVANRTLERASILAEQFGAHAVLLADIPAELVRSDIVISSTASQLPILGKGAVESALKLRKHKPIFMVDIAVPRDIEPEVGELDDVYLYSVDDLHEVVAENLKSRQGAAQAAEEMVSAGADDFMVRLRELAAVDVLKAYRQQGERLRDEELLKAQRLLANGSSAEDVLVQLARGLTNKLLHAPSVQLKKLTAEGRLDALAMAQELFALGEGASDSSSDKKLQ</sequence>
<protein>
    <recommendedName>
        <fullName evidence="1">Glutamyl-tRNA reductase</fullName>
        <shortName evidence="1">GluTR</shortName>
        <ecNumber evidence="1">1.2.1.70</ecNumber>
    </recommendedName>
</protein>